<evidence type="ECO:0000255" key="1">
    <source>
        <dbReference type="HAMAP-Rule" id="MF_01368"/>
    </source>
</evidence>
<evidence type="ECO:0000305" key="2"/>
<gene>
    <name evidence="1" type="primary">rplQ</name>
    <name type="ordered locus">Psyc_0515</name>
</gene>
<dbReference type="EMBL" id="CP000082">
    <property type="protein sequence ID" value="AAZ18378.1"/>
    <property type="molecule type" value="Genomic_DNA"/>
</dbReference>
<dbReference type="RefSeq" id="WP_011279809.1">
    <property type="nucleotide sequence ID" value="NC_007204.1"/>
</dbReference>
<dbReference type="SMR" id="Q4FUD0"/>
<dbReference type="STRING" id="259536.Psyc_0515"/>
<dbReference type="KEGG" id="par:Psyc_0515"/>
<dbReference type="eggNOG" id="COG0203">
    <property type="taxonomic scope" value="Bacteria"/>
</dbReference>
<dbReference type="HOGENOM" id="CLU_074407_2_0_6"/>
<dbReference type="OrthoDB" id="9809073at2"/>
<dbReference type="Proteomes" id="UP000000546">
    <property type="component" value="Chromosome"/>
</dbReference>
<dbReference type="GO" id="GO:0022625">
    <property type="term" value="C:cytosolic large ribosomal subunit"/>
    <property type="evidence" value="ECO:0007669"/>
    <property type="project" value="TreeGrafter"/>
</dbReference>
<dbReference type="GO" id="GO:0003735">
    <property type="term" value="F:structural constituent of ribosome"/>
    <property type="evidence" value="ECO:0007669"/>
    <property type="project" value="InterPro"/>
</dbReference>
<dbReference type="GO" id="GO:0006412">
    <property type="term" value="P:translation"/>
    <property type="evidence" value="ECO:0007669"/>
    <property type="project" value="UniProtKB-UniRule"/>
</dbReference>
<dbReference type="FunFam" id="3.90.1030.10:FF:000001">
    <property type="entry name" value="50S ribosomal protein L17"/>
    <property type="match status" value="1"/>
</dbReference>
<dbReference type="Gene3D" id="3.90.1030.10">
    <property type="entry name" value="Ribosomal protein L17"/>
    <property type="match status" value="1"/>
</dbReference>
<dbReference type="HAMAP" id="MF_01368">
    <property type="entry name" value="Ribosomal_bL17"/>
    <property type="match status" value="1"/>
</dbReference>
<dbReference type="InterPro" id="IPR000456">
    <property type="entry name" value="Ribosomal_bL17"/>
</dbReference>
<dbReference type="InterPro" id="IPR047859">
    <property type="entry name" value="Ribosomal_bL17_CS"/>
</dbReference>
<dbReference type="InterPro" id="IPR036373">
    <property type="entry name" value="Ribosomal_bL17_sf"/>
</dbReference>
<dbReference type="NCBIfam" id="TIGR00059">
    <property type="entry name" value="L17"/>
    <property type="match status" value="1"/>
</dbReference>
<dbReference type="PANTHER" id="PTHR14413:SF16">
    <property type="entry name" value="LARGE RIBOSOMAL SUBUNIT PROTEIN BL17M"/>
    <property type="match status" value="1"/>
</dbReference>
<dbReference type="PANTHER" id="PTHR14413">
    <property type="entry name" value="RIBOSOMAL PROTEIN L17"/>
    <property type="match status" value="1"/>
</dbReference>
<dbReference type="Pfam" id="PF01196">
    <property type="entry name" value="Ribosomal_L17"/>
    <property type="match status" value="1"/>
</dbReference>
<dbReference type="SUPFAM" id="SSF64263">
    <property type="entry name" value="Prokaryotic ribosomal protein L17"/>
    <property type="match status" value="1"/>
</dbReference>
<dbReference type="PROSITE" id="PS01167">
    <property type="entry name" value="RIBOSOMAL_L17"/>
    <property type="match status" value="1"/>
</dbReference>
<feature type="chain" id="PRO_1000055923" description="Large ribosomal subunit protein bL17">
    <location>
        <begin position="1"/>
        <end position="119"/>
    </location>
</feature>
<protein>
    <recommendedName>
        <fullName evidence="1">Large ribosomal subunit protein bL17</fullName>
    </recommendedName>
    <alternativeName>
        <fullName evidence="2">50S ribosomal protein L17</fullName>
    </alternativeName>
</protein>
<keyword id="KW-1185">Reference proteome</keyword>
<keyword id="KW-0687">Ribonucleoprotein</keyword>
<keyword id="KW-0689">Ribosomal protein</keyword>
<reference key="1">
    <citation type="journal article" date="2010" name="Appl. Environ. Microbiol.">
        <title>The genome sequence of Psychrobacter arcticus 273-4, a psychroactive Siberian permafrost bacterium, reveals mechanisms for adaptation to low-temperature growth.</title>
        <authorList>
            <person name="Ayala-del-Rio H.L."/>
            <person name="Chain P.S."/>
            <person name="Grzymski J.J."/>
            <person name="Ponder M.A."/>
            <person name="Ivanova N."/>
            <person name="Bergholz P.W."/>
            <person name="Di Bartolo G."/>
            <person name="Hauser L."/>
            <person name="Land M."/>
            <person name="Bakermans C."/>
            <person name="Rodrigues D."/>
            <person name="Klappenbach J."/>
            <person name="Zarka D."/>
            <person name="Larimer F."/>
            <person name="Richardson P."/>
            <person name="Murray A."/>
            <person name="Thomashow M."/>
            <person name="Tiedje J.M."/>
        </authorList>
    </citation>
    <scope>NUCLEOTIDE SEQUENCE [LARGE SCALE GENOMIC DNA]</scope>
    <source>
        <strain>DSM 17307 / VKM B-2377 / 273-4</strain>
    </source>
</reference>
<proteinExistence type="inferred from homology"/>
<name>RL17_PSYA2</name>
<organism>
    <name type="scientific">Psychrobacter arcticus (strain DSM 17307 / VKM B-2377 / 273-4)</name>
    <dbReference type="NCBI Taxonomy" id="259536"/>
    <lineage>
        <taxon>Bacteria</taxon>
        <taxon>Pseudomonadati</taxon>
        <taxon>Pseudomonadota</taxon>
        <taxon>Gammaproteobacteria</taxon>
        <taxon>Moraxellales</taxon>
        <taxon>Moraxellaceae</taxon>
        <taxon>Psychrobacter</taxon>
    </lineage>
</organism>
<comment type="subunit">
    <text evidence="1">Part of the 50S ribosomal subunit. Contacts protein L32.</text>
</comment>
<comment type="similarity">
    <text evidence="1">Belongs to the bacterial ribosomal protein bL17 family.</text>
</comment>
<accession>Q4FUD0</accession>
<sequence length="119" mass="13554">MRHRKSGVKLGRTGSHRKAMFQNMTNSLFEHELIKTTLPKAKELRRVAEPLITMAKEDSVANRRLAFSRMRSKAMVGKLFGTLGPRYQARPGGYLRIVKCGYRDGDNAPMAYVELVDRD</sequence>